<dbReference type="EC" id="5.3.1.1" evidence="1"/>
<dbReference type="EMBL" id="CP000720">
    <property type="protein sequence ID" value="ABS49584.1"/>
    <property type="molecule type" value="Genomic_DNA"/>
</dbReference>
<dbReference type="RefSeq" id="WP_002208959.1">
    <property type="nucleotide sequence ID" value="NC_009708.1"/>
</dbReference>
<dbReference type="SMR" id="A7FCW8"/>
<dbReference type="GeneID" id="57974507"/>
<dbReference type="KEGG" id="ypi:YpsIP31758_0096"/>
<dbReference type="HOGENOM" id="CLU_024251_2_1_6"/>
<dbReference type="UniPathway" id="UPA00109">
    <property type="reaction ID" value="UER00189"/>
</dbReference>
<dbReference type="UniPathway" id="UPA00138"/>
<dbReference type="Proteomes" id="UP000002412">
    <property type="component" value="Chromosome"/>
</dbReference>
<dbReference type="GO" id="GO:0005829">
    <property type="term" value="C:cytosol"/>
    <property type="evidence" value="ECO:0007669"/>
    <property type="project" value="TreeGrafter"/>
</dbReference>
<dbReference type="GO" id="GO:0004807">
    <property type="term" value="F:triose-phosphate isomerase activity"/>
    <property type="evidence" value="ECO:0007669"/>
    <property type="project" value="UniProtKB-UniRule"/>
</dbReference>
<dbReference type="GO" id="GO:0006094">
    <property type="term" value="P:gluconeogenesis"/>
    <property type="evidence" value="ECO:0007669"/>
    <property type="project" value="UniProtKB-UniRule"/>
</dbReference>
<dbReference type="GO" id="GO:0046166">
    <property type="term" value="P:glyceraldehyde-3-phosphate biosynthetic process"/>
    <property type="evidence" value="ECO:0007669"/>
    <property type="project" value="TreeGrafter"/>
</dbReference>
<dbReference type="GO" id="GO:0019563">
    <property type="term" value="P:glycerol catabolic process"/>
    <property type="evidence" value="ECO:0007669"/>
    <property type="project" value="TreeGrafter"/>
</dbReference>
<dbReference type="GO" id="GO:0006096">
    <property type="term" value="P:glycolytic process"/>
    <property type="evidence" value="ECO:0007669"/>
    <property type="project" value="UniProtKB-UniRule"/>
</dbReference>
<dbReference type="CDD" id="cd00311">
    <property type="entry name" value="TIM"/>
    <property type="match status" value="1"/>
</dbReference>
<dbReference type="FunFam" id="3.20.20.70:FF:000020">
    <property type="entry name" value="Triosephosphate isomerase"/>
    <property type="match status" value="1"/>
</dbReference>
<dbReference type="Gene3D" id="3.20.20.70">
    <property type="entry name" value="Aldolase class I"/>
    <property type="match status" value="1"/>
</dbReference>
<dbReference type="HAMAP" id="MF_00147_B">
    <property type="entry name" value="TIM_B"/>
    <property type="match status" value="1"/>
</dbReference>
<dbReference type="InterPro" id="IPR013785">
    <property type="entry name" value="Aldolase_TIM"/>
</dbReference>
<dbReference type="InterPro" id="IPR035990">
    <property type="entry name" value="TIM_sf"/>
</dbReference>
<dbReference type="InterPro" id="IPR022896">
    <property type="entry name" value="TrioseP_Isoase_bac/euk"/>
</dbReference>
<dbReference type="InterPro" id="IPR000652">
    <property type="entry name" value="Triosephosphate_isomerase"/>
</dbReference>
<dbReference type="InterPro" id="IPR020861">
    <property type="entry name" value="Triosephosphate_isomerase_AS"/>
</dbReference>
<dbReference type="NCBIfam" id="TIGR00419">
    <property type="entry name" value="tim"/>
    <property type="match status" value="1"/>
</dbReference>
<dbReference type="PANTHER" id="PTHR21139">
    <property type="entry name" value="TRIOSEPHOSPHATE ISOMERASE"/>
    <property type="match status" value="1"/>
</dbReference>
<dbReference type="PANTHER" id="PTHR21139:SF42">
    <property type="entry name" value="TRIOSEPHOSPHATE ISOMERASE"/>
    <property type="match status" value="1"/>
</dbReference>
<dbReference type="Pfam" id="PF00121">
    <property type="entry name" value="TIM"/>
    <property type="match status" value="1"/>
</dbReference>
<dbReference type="SUPFAM" id="SSF51351">
    <property type="entry name" value="Triosephosphate isomerase (TIM)"/>
    <property type="match status" value="1"/>
</dbReference>
<dbReference type="PROSITE" id="PS00171">
    <property type="entry name" value="TIM_1"/>
    <property type="match status" value="1"/>
</dbReference>
<dbReference type="PROSITE" id="PS51440">
    <property type="entry name" value="TIM_2"/>
    <property type="match status" value="1"/>
</dbReference>
<evidence type="ECO:0000255" key="1">
    <source>
        <dbReference type="HAMAP-Rule" id="MF_00147"/>
    </source>
</evidence>
<gene>
    <name evidence="1" type="primary">tpiA</name>
    <name type="ordered locus">YpsIP31758_0096</name>
</gene>
<proteinExistence type="inferred from homology"/>
<name>TPIS_YERP3</name>
<organism>
    <name type="scientific">Yersinia pseudotuberculosis serotype O:1b (strain IP 31758)</name>
    <dbReference type="NCBI Taxonomy" id="349747"/>
    <lineage>
        <taxon>Bacteria</taxon>
        <taxon>Pseudomonadati</taxon>
        <taxon>Pseudomonadota</taxon>
        <taxon>Gammaproteobacteria</taxon>
        <taxon>Enterobacterales</taxon>
        <taxon>Yersiniaceae</taxon>
        <taxon>Yersinia</taxon>
    </lineage>
</organism>
<keyword id="KW-0963">Cytoplasm</keyword>
<keyword id="KW-0312">Gluconeogenesis</keyword>
<keyword id="KW-0324">Glycolysis</keyword>
<keyword id="KW-0413">Isomerase</keyword>
<reference key="1">
    <citation type="journal article" date="2007" name="PLoS Genet.">
        <title>The complete genome sequence of Yersinia pseudotuberculosis IP31758, the causative agent of Far East scarlet-like fever.</title>
        <authorList>
            <person name="Eppinger M."/>
            <person name="Rosovitz M.J."/>
            <person name="Fricke W.F."/>
            <person name="Rasko D.A."/>
            <person name="Kokorina G."/>
            <person name="Fayolle C."/>
            <person name="Lindler L.E."/>
            <person name="Carniel E."/>
            <person name="Ravel J."/>
        </authorList>
    </citation>
    <scope>NUCLEOTIDE SEQUENCE [LARGE SCALE GENOMIC DNA]</scope>
    <source>
        <strain>IP 31758</strain>
    </source>
</reference>
<feature type="chain" id="PRO_1000058121" description="Triosephosphate isomerase">
    <location>
        <begin position="1"/>
        <end position="255"/>
    </location>
</feature>
<feature type="active site" description="Electrophile" evidence="1">
    <location>
        <position position="95"/>
    </location>
</feature>
<feature type="active site" description="Proton acceptor" evidence="1">
    <location>
        <position position="167"/>
    </location>
</feature>
<feature type="binding site" evidence="1">
    <location>
        <begin position="9"/>
        <end position="11"/>
    </location>
    <ligand>
        <name>substrate</name>
    </ligand>
</feature>
<feature type="binding site" evidence="1">
    <location>
        <position position="173"/>
    </location>
    <ligand>
        <name>substrate</name>
    </ligand>
</feature>
<feature type="binding site" evidence="1">
    <location>
        <position position="212"/>
    </location>
    <ligand>
        <name>substrate</name>
    </ligand>
</feature>
<feature type="binding site" evidence="1">
    <location>
        <begin position="233"/>
        <end position="234"/>
    </location>
    <ligand>
        <name>substrate</name>
    </ligand>
</feature>
<sequence length="255" mass="26794">MRHPLVMGNWKLNGSTHMVNELIAGLRKELSTVDGCGVAIAPPAIYLNQAKHELAGSRIALGAQNVDVNLSGAFTGETSAEMLKDIGAQYIIIGHSERRTYHQESDELIAKKFGVLKEIGLIPVLCIGESEAENEAGQTEAVCAKQLDAVLNTLGVKAFEGAVIAYEPIWAIGTGKSATPAQAQAVHKFIRDHIAKQDAAVAAQVIIQYGGSVNDKNAAELFTQPDIDGALVGGASLKADAFAVIVKAAAKAKKA</sequence>
<comment type="function">
    <text evidence="1">Involved in the gluconeogenesis. Catalyzes stereospecifically the conversion of dihydroxyacetone phosphate (DHAP) to D-glyceraldehyde-3-phosphate (G3P).</text>
</comment>
<comment type="catalytic activity">
    <reaction evidence="1">
        <text>D-glyceraldehyde 3-phosphate = dihydroxyacetone phosphate</text>
        <dbReference type="Rhea" id="RHEA:18585"/>
        <dbReference type="ChEBI" id="CHEBI:57642"/>
        <dbReference type="ChEBI" id="CHEBI:59776"/>
        <dbReference type="EC" id="5.3.1.1"/>
    </reaction>
</comment>
<comment type="pathway">
    <text evidence="1">Carbohydrate biosynthesis; gluconeogenesis.</text>
</comment>
<comment type="pathway">
    <text evidence="1">Carbohydrate degradation; glycolysis; D-glyceraldehyde 3-phosphate from glycerone phosphate: step 1/1.</text>
</comment>
<comment type="subunit">
    <text evidence="1">Homodimer.</text>
</comment>
<comment type="subcellular location">
    <subcellularLocation>
        <location evidence="1">Cytoplasm</location>
    </subcellularLocation>
</comment>
<comment type="similarity">
    <text evidence="1">Belongs to the triosephosphate isomerase family.</text>
</comment>
<protein>
    <recommendedName>
        <fullName evidence="1">Triosephosphate isomerase</fullName>
        <shortName evidence="1">TIM</shortName>
        <shortName evidence="1">TPI</shortName>
        <ecNumber evidence="1">5.3.1.1</ecNumber>
    </recommendedName>
    <alternativeName>
        <fullName evidence="1">Triose-phosphate isomerase</fullName>
    </alternativeName>
</protein>
<accession>A7FCW8</accession>